<reference key="1">
    <citation type="journal article" date="2002" name="Science">
        <title>50 million years of genomic stasis in endosymbiotic bacteria.</title>
        <authorList>
            <person name="Tamas I."/>
            <person name="Klasson L."/>
            <person name="Canbaeck B."/>
            <person name="Naeslund A.K."/>
            <person name="Eriksson A.-S."/>
            <person name="Wernegreen J.J."/>
            <person name="Sandstroem J.P."/>
            <person name="Moran N.A."/>
            <person name="Andersson S.G.E."/>
        </authorList>
    </citation>
    <scope>NUCLEOTIDE SEQUENCE [LARGE SCALE GENOMIC DNA]</scope>
    <source>
        <strain>Sg</strain>
    </source>
</reference>
<gene>
    <name evidence="1" type="primary">rpsF</name>
    <name type="ordered locus">BUsg_544</name>
</gene>
<sequence length="113" mass="13501">MRHYEIIFMIHPDYSEKVSVIIEKYKKIIHHNSGIIHRLEDWGRRQLAYPINKLHKAHYILLNIETFPKTISLLETDFRFNNAVIRNIIISVKKAINEPSPVIKLKEEKKDKK</sequence>
<dbReference type="EMBL" id="AE013218">
    <property type="protein sequence ID" value="AAM68083.1"/>
    <property type="molecule type" value="Genomic_DNA"/>
</dbReference>
<dbReference type="RefSeq" id="WP_011054049.1">
    <property type="nucleotide sequence ID" value="NC_004061.1"/>
</dbReference>
<dbReference type="SMR" id="Q8K918"/>
<dbReference type="STRING" id="198804.BUsg_544"/>
<dbReference type="GeneID" id="93004021"/>
<dbReference type="KEGG" id="bas:BUsg_544"/>
<dbReference type="eggNOG" id="COG0360">
    <property type="taxonomic scope" value="Bacteria"/>
</dbReference>
<dbReference type="HOGENOM" id="CLU_113441_6_1_6"/>
<dbReference type="Proteomes" id="UP000000416">
    <property type="component" value="Chromosome"/>
</dbReference>
<dbReference type="GO" id="GO:0022627">
    <property type="term" value="C:cytosolic small ribosomal subunit"/>
    <property type="evidence" value="ECO:0007669"/>
    <property type="project" value="TreeGrafter"/>
</dbReference>
<dbReference type="GO" id="GO:0070181">
    <property type="term" value="F:small ribosomal subunit rRNA binding"/>
    <property type="evidence" value="ECO:0007669"/>
    <property type="project" value="TreeGrafter"/>
</dbReference>
<dbReference type="GO" id="GO:0003735">
    <property type="term" value="F:structural constituent of ribosome"/>
    <property type="evidence" value="ECO:0007669"/>
    <property type="project" value="InterPro"/>
</dbReference>
<dbReference type="GO" id="GO:0006412">
    <property type="term" value="P:translation"/>
    <property type="evidence" value="ECO:0007669"/>
    <property type="project" value="UniProtKB-UniRule"/>
</dbReference>
<dbReference type="CDD" id="cd00473">
    <property type="entry name" value="bS6"/>
    <property type="match status" value="1"/>
</dbReference>
<dbReference type="Gene3D" id="3.30.70.60">
    <property type="match status" value="1"/>
</dbReference>
<dbReference type="HAMAP" id="MF_00360">
    <property type="entry name" value="Ribosomal_bS6"/>
    <property type="match status" value="1"/>
</dbReference>
<dbReference type="InterPro" id="IPR000529">
    <property type="entry name" value="Ribosomal_bS6"/>
</dbReference>
<dbReference type="InterPro" id="IPR020815">
    <property type="entry name" value="Ribosomal_bS6_CS"/>
</dbReference>
<dbReference type="InterPro" id="IPR035980">
    <property type="entry name" value="Ribosomal_bS6_sf"/>
</dbReference>
<dbReference type="InterPro" id="IPR020814">
    <property type="entry name" value="Ribosomal_S6_plastid/chlpt"/>
</dbReference>
<dbReference type="InterPro" id="IPR014717">
    <property type="entry name" value="Transl_elong_EF1B/ribsomal_bS6"/>
</dbReference>
<dbReference type="NCBIfam" id="TIGR00166">
    <property type="entry name" value="S6"/>
    <property type="match status" value="1"/>
</dbReference>
<dbReference type="PANTHER" id="PTHR21011">
    <property type="entry name" value="MITOCHONDRIAL 28S RIBOSOMAL PROTEIN S6"/>
    <property type="match status" value="1"/>
</dbReference>
<dbReference type="PANTHER" id="PTHR21011:SF1">
    <property type="entry name" value="SMALL RIBOSOMAL SUBUNIT PROTEIN BS6M"/>
    <property type="match status" value="1"/>
</dbReference>
<dbReference type="Pfam" id="PF01250">
    <property type="entry name" value="Ribosomal_S6"/>
    <property type="match status" value="1"/>
</dbReference>
<dbReference type="SUPFAM" id="SSF54995">
    <property type="entry name" value="Ribosomal protein S6"/>
    <property type="match status" value="1"/>
</dbReference>
<dbReference type="PROSITE" id="PS01048">
    <property type="entry name" value="RIBOSOMAL_S6"/>
    <property type="match status" value="1"/>
</dbReference>
<name>RS6_BUCAP</name>
<feature type="chain" id="PRO_0000176741" description="Small ribosomal subunit protein bS6">
    <location>
        <begin position="1"/>
        <end position="113"/>
    </location>
</feature>
<protein>
    <recommendedName>
        <fullName evidence="1">Small ribosomal subunit protein bS6</fullName>
    </recommendedName>
    <alternativeName>
        <fullName evidence="2">30S ribosomal protein S6</fullName>
    </alternativeName>
</protein>
<keyword id="KW-0687">Ribonucleoprotein</keyword>
<keyword id="KW-0689">Ribosomal protein</keyword>
<keyword id="KW-0694">RNA-binding</keyword>
<keyword id="KW-0699">rRNA-binding</keyword>
<evidence type="ECO:0000255" key="1">
    <source>
        <dbReference type="HAMAP-Rule" id="MF_00360"/>
    </source>
</evidence>
<evidence type="ECO:0000305" key="2"/>
<proteinExistence type="inferred from homology"/>
<comment type="function">
    <text evidence="1">Binds together with bS18 to 16S ribosomal RNA.</text>
</comment>
<comment type="similarity">
    <text evidence="1">Belongs to the bacterial ribosomal protein bS6 family.</text>
</comment>
<organism>
    <name type="scientific">Buchnera aphidicola subsp. Schizaphis graminum (strain Sg)</name>
    <dbReference type="NCBI Taxonomy" id="198804"/>
    <lineage>
        <taxon>Bacteria</taxon>
        <taxon>Pseudomonadati</taxon>
        <taxon>Pseudomonadota</taxon>
        <taxon>Gammaproteobacteria</taxon>
        <taxon>Enterobacterales</taxon>
        <taxon>Erwiniaceae</taxon>
        <taxon>Buchnera</taxon>
    </lineage>
</organism>
<accession>Q8K918</accession>